<gene>
    <name type="primary">CAM1</name>
    <name type="synonym">TEF3</name>
    <name type="ordered locus">YPL048W</name>
</gene>
<name>EF1G1_YEAST</name>
<accession>P29547</accession>
<accession>D6W3W6</accession>
<accession>Q9URC6</accession>
<comment type="function">
    <text evidence="3">Subunit of the eukaryotic elongation factor 1 complex (eEF1). Probably plays a role in anchoring the complex to other cellular components. May be involved in transcriptional regulation of MXR1.</text>
</comment>
<comment type="pathway">
    <text>Protein biosynthesis; polypeptide chain elongation.</text>
</comment>
<comment type="subunit">
    <text evidence="4">The eukaryotic elongation factor 1 complex (eEF1) is probably a heterohexamer. Two trimeric complexes, each composed of eEF1A (TEF1 or TEF2), eEF1Balpha (EFB1) and eEF1Bgamma (CAM1 or TEF4), are probably dimerized via the eF1Bgamma subunits. The eEF1B subcomplex with the GEF activity is formed of eEF1Balpha and eEF1Bgamma. CAM1 interacts with EFB1. Component of a complex bound to MXR1 promoter region.</text>
</comment>
<comment type="subcellular location">
    <subcellularLocation>
        <location>Cytoplasm</location>
    </subcellularLocation>
    <subcellularLocation>
        <location>Nucleus</location>
    </subcellularLocation>
</comment>
<comment type="domain">
    <text>Ths GST-like domain mediates the interaction to eEFB1 and may be responsible for dimerization of the eEF1 complex.</text>
</comment>
<comment type="miscellaneous">
    <text evidence="5">Present with 60865 molecules/cell in log phase SD medium.</text>
</comment>
<comment type="miscellaneous">
    <text>There are 2 isoforms for eEF1Bgamma in yeast.</text>
</comment>
<organism>
    <name type="scientific">Saccharomyces cerevisiae (strain ATCC 204508 / S288c)</name>
    <name type="common">Baker's yeast</name>
    <dbReference type="NCBI Taxonomy" id="559292"/>
    <lineage>
        <taxon>Eukaryota</taxon>
        <taxon>Fungi</taxon>
        <taxon>Dikarya</taxon>
        <taxon>Ascomycota</taxon>
        <taxon>Saccharomycotina</taxon>
        <taxon>Saccharomycetes</taxon>
        <taxon>Saccharomycetales</taxon>
        <taxon>Saccharomycetaceae</taxon>
        <taxon>Saccharomyces</taxon>
    </lineage>
</organism>
<sequence>MSQGTLYANFRIRTWVPRGLVKALKLDVKVVTPDAAAEQFARDFPLKKVPAFVGPKGYKLTEAMAINYYLVKLSQDDKMKTQLLGADDDLNAQAQIIRWQSLANSDLCIQIANTIVPLKGGAPYNKKSVDSAMDAVDKIVDIFENRLKNYTYLATENISLADLVAASIFTRYFESLFGTEWRAQHPAIVRWFNTVRASPFLKDEYKDFKFADKPLSPPQKKKEKKAPAAAPAASKKKEEAKPAATETETSSKKPKHPLELLGKSTFVLDDWKRKYSNEDTRPVALPWFWEHYNPEEYSLWKVTYKYNDELTLTFMSNNLVGGFFNRLSASTKYMFGCLVVYGENNNNGIVGAVMVRGQDYVPAFDVAPDWESYDYAKLDPTNDDDKEFINNMWAWDKPVSVNGEPKEIVDGKVLK</sequence>
<dbReference type="EMBL" id="L01879">
    <property type="protein sequence ID" value="AAA16892.1"/>
    <property type="molecule type" value="Unassigned_DNA"/>
</dbReference>
<dbReference type="EMBL" id="X67917">
    <property type="protein sequence ID" value="CAA48116.1"/>
    <property type="molecule type" value="Genomic_DNA"/>
</dbReference>
<dbReference type="EMBL" id="U44030">
    <property type="protein sequence ID" value="AAB68173.1"/>
    <property type="molecule type" value="Genomic_DNA"/>
</dbReference>
<dbReference type="EMBL" id="BK006949">
    <property type="protein sequence ID" value="DAA11382.1"/>
    <property type="molecule type" value="Genomic_DNA"/>
</dbReference>
<dbReference type="PIR" id="S29345">
    <property type="entry name" value="S29345"/>
</dbReference>
<dbReference type="RefSeq" id="NP_015277.1">
    <property type="nucleotide sequence ID" value="NM_001183862.1"/>
</dbReference>
<dbReference type="PDB" id="1NHY">
    <property type="method" value="X-ray"/>
    <property type="resolution" value="3.00 A"/>
    <property type="chains" value="A=1-219"/>
</dbReference>
<dbReference type="PDBsum" id="1NHY"/>
<dbReference type="SMR" id="P29547"/>
<dbReference type="BioGRID" id="36132">
    <property type="interactions" value="195"/>
</dbReference>
<dbReference type="ComplexPortal" id="CPX-2854">
    <property type="entry name" value="Elongation Factor eEF1 complex, variant CAM1"/>
</dbReference>
<dbReference type="DIP" id="DIP-6813N"/>
<dbReference type="FunCoup" id="P29547">
    <property type="interactions" value="1159"/>
</dbReference>
<dbReference type="IntAct" id="P29547">
    <property type="interactions" value="20"/>
</dbReference>
<dbReference type="MINT" id="P29547"/>
<dbReference type="STRING" id="4932.YPL048W"/>
<dbReference type="CarbonylDB" id="P29547"/>
<dbReference type="iPTMnet" id="P29547"/>
<dbReference type="PaxDb" id="4932-YPL048W"/>
<dbReference type="PeptideAtlas" id="P29547"/>
<dbReference type="EnsemblFungi" id="YPL048W_mRNA">
    <property type="protein sequence ID" value="YPL048W"/>
    <property type="gene ID" value="YPL048W"/>
</dbReference>
<dbReference type="GeneID" id="856059"/>
<dbReference type="KEGG" id="sce:YPL048W"/>
<dbReference type="AGR" id="SGD:S000005969"/>
<dbReference type="SGD" id="S000005969">
    <property type="gene designation" value="CAM1"/>
</dbReference>
<dbReference type="VEuPathDB" id="FungiDB:YPL048W"/>
<dbReference type="eggNOG" id="KOG0867">
    <property type="taxonomic scope" value="Eukaryota"/>
</dbReference>
<dbReference type="eggNOG" id="KOG1627">
    <property type="taxonomic scope" value="Eukaryota"/>
</dbReference>
<dbReference type="GeneTree" id="ENSGT00940000176354"/>
<dbReference type="HOGENOM" id="CLU_011226_3_0_1"/>
<dbReference type="InParanoid" id="P29547"/>
<dbReference type="OMA" id="TQYFSWT"/>
<dbReference type="OrthoDB" id="249703at2759"/>
<dbReference type="BioCyc" id="YEAST:G3O-33961-MONOMER"/>
<dbReference type="Reactome" id="R-SCE-156842">
    <property type="pathway name" value="Eukaryotic Translation Elongation"/>
</dbReference>
<dbReference type="UniPathway" id="UPA00345"/>
<dbReference type="BioGRID-ORCS" id="856059">
    <property type="hits" value="0 hits in 10 CRISPR screens"/>
</dbReference>
<dbReference type="CD-CODE" id="E03F929F">
    <property type="entry name" value="Stress granule"/>
</dbReference>
<dbReference type="EvolutionaryTrace" id="P29547"/>
<dbReference type="PRO" id="PR:P29547"/>
<dbReference type="Proteomes" id="UP000002311">
    <property type="component" value="Chromosome XVI"/>
</dbReference>
<dbReference type="RNAct" id="P29547">
    <property type="molecule type" value="protein"/>
</dbReference>
<dbReference type="GO" id="GO:0005737">
    <property type="term" value="C:cytoplasm"/>
    <property type="evidence" value="ECO:0000318"/>
    <property type="project" value="GO_Central"/>
</dbReference>
<dbReference type="GO" id="GO:0010494">
    <property type="term" value="C:cytoplasmic stress granule"/>
    <property type="evidence" value="ECO:0007005"/>
    <property type="project" value="SGD"/>
</dbReference>
<dbReference type="GO" id="GO:0005853">
    <property type="term" value="C:eukaryotic translation elongation factor 1 complex"/>
    <property type="evidence" value="ECO:0000303"/>
    <property type="project" value="ComplexPortal"/>
</dbReference>
<dbReference type="GO" id="GO:0005634">
    <property type="term" value="C:nucleus"/>
    <property type="evidence" value="ECO:0000314"/>
    <property type="project" value="SGD"/>
</dbReference>
<dbReference type="GO" id="GO:0005840">
    <property type="term" value="C:ribosome"/>
    <property type="evidence" value="ECO:0000314"/>
    <property type="project" value="ComplexPortal"/>
</dbReference>
<dbReference type="GO" id="GO:0005509">
    <property type="term" value="F:calcium ion binding"/>
    <property type="evidence" value="ECO:0000314"/>
    <property type="project" value="SGD"/>
</dbReference>
<dbReference type="GO" id="GO:0001046">
    <property type="term" value="F:core promoter sequence-specific DNA binding"/>
    <property type="evidence" value="ECO:0000314"/>
    <property type="project" value="SGD"/>
</dbReference>
<dbReference type="GO" id="GO:0003700">
    <property type="term" value="F:DNA-binding transcription factor activity"/>
    <property type="evidence" value="ECO:0000315"/>
    <property type="project" value="SGD"/>
</dbReference>
<dbReference type="GO" id="GO:0005085">
    <property type="term" value="F:guanyl-nucleotide exchange factor activity"/>
    <property type="evidence" value="ECO:0000314"/>
    <property type="project" value="SGD"/>
</dbReference>
<dbReference type="GO" id="GO:0005543">
    <property type="term" value="F:phospholipid binding"/>
    <property type="evidence" value="ECO:0000314"/>
    <property type="project" value="SGD"/>
</dbReference>
<dbReference type="GO" id="GO:0003746">
    <property type="term" value="F:translation elongation factor activity"/>
    <property type="evidence" value="ECO:0007669"/>
    <property type="project" value="UniProtKB-KW"/>
</dbReference>
<dbReference type="GO" id="GO:0045944">
    <property type="term" value="P:positive regulation of transcription by RNA polymerase II"/>
    <property type="evidence" value="ECO:0000315"/>
    <property type="project" value="SGD"/>
</dbReference>
<dbReference type="GO" id="GO:0006449">
    <property type="term" value="P:regulation of translational termination"/>
    <property type="evidence" value="ECO:0000316"/>
    <property type="project" value="SGD"/>
</dbReference>
<dbReference type="GO" id="GO:0006414">
    <property type="term" value="P:translational elongation"/>
    <property type="evidence" value="ECO:0000314"/>
    <property type="project" value="ComplexPortal"/>
</dbReference>
<dbReference type="CDD" id="cd03181">
    <property type="entry name" value="GST_C_EF1Bgamma_like"/>
    <property type="match status" value="1"/>
</dbReference>
<dbReference type="CDD" id="cd03044">
    <property type="entry name" value="GST_N_EF1Bgamma"/>
    <property type="match status" value="1"/>
</dbReference>
<dbReference type="FunFam" id="1.20.1050.10:FF:000006">
    <property type="entry name" value="Elongation factor 1 gamma"/>
    <property type="match status" value="1"/>
</dbReference>
<dbReference type="FunFam" id="3.40.30.10:FF:000142">
    <property type="entry name" value="Elongation factor 1 gamma"/>
    <property type="match status" value="1"/>
</dbReference>
<dbReference type="FunFam" id="3.30.70.1010:FF:000001">
    <property type="entry name" value="Elongation factor 1-gamma 1"/>
    <property type="match status" value="1"/>
</dbReference>
<dbReference type="Gene3D" id="1.20.1050.10">
    <property type="match status" value="1"/>
</dbReference>
<dbReference type="Gene3D" id="3.40.30.10">
    <property type="entry name" value="Glutaredoxin"/>
    <property type="match status" value="1"/>
</dbReference>
<dbReference type="Gene3D" id="3.30.70.1010">
    <property type="entry name" value="Translation elongation factor EF1B, gamma chain, conserved domain"/>
    <property type="match status" value="1"/>
</dbReference>
<dbReference type="InterPro" id="IPR050802">
    <property type="entry name" value="EF-GSTs"/>
</dbReference>
<dbReference type="InterPro" id="IPR001662">
    <property type="entry name" value="EF1B_G_C"/>
</dbReference>
<dbReference type="InterPro" id="IPR036433">
    <property type="entry name" value="EF1B_G_C_sf"/>
</dbReference>
<dbReference type="InterPro" id="IPR010987">
    <property type="entry name" value="Glutathione-S-Trfase_C-like"/>
</dbReference>
<dbReference type="InterPro" id="IPR036282">
    <property type="entry name" value="Glutathione-S-Trfase_C_sf"/>
</dbReference>
<dbReference type="InterPro" id="IPR040079">
    <property type="entry name" value="Glutathione_S-Trfase"/>
</dbReference>
<dbReference type="InterPro" id="IPR004045">
    <property type="entry name" value="Glutathione_S-Trfase_N"/>
</dbReference>
<dbReference type="InterPro" id="IPR004046">
    <property type="entry name" value="GST_C"/>
</dbReference>
<dbReference type="InterPro" id="IPR036249">
    <property type="entry name" value="Thioredoxin-like_sf"/>
</dbReference>
<dbReference type="PANTHER" id="PTHR43986">
    <property type="entry name" value="ELONGATION FACTOR 1-GAMMA"/>
    <property type="match status" value="1"/>
</dbReference>
<dbReference type="PANTHER" id="PTHR43986:SF1">
    <property type="entry name" value="ELONGATION FACTOR 1-GAMMA"/>
    <property type="match status" value="1"/>
</dbReference>
<dbReference type="Pfam" id="PF00647">
    <property type="entry name" value="EF1G"/>
    <property type="match status" value="1"/>
</dbReference>
<dbReference type="Pfam" id="PF00043">
    <property type="entry name" value="GST_C"/>
    <property type="match status" value="1"/>
</dbReference>
<dbReference type="Pfam" id="PF02798">
    <property type="entry name" value="GST_N"/>
    <property type="match status" value="1"/>
</dbReference>
<dbReference type="SFLD" id="SFLDS00019">
    <property type="entry name" value="Glutathione_Transferase_(cytos"/>
    <property type="match status" value="1"/>
</dbReference>
<dbReference type="SFLD" id="SFLDG00358">
    <property type="entry name" value="Main_(cytGST)"/>
    <property type="match status" value="1"/>
</dbReference>
<dbReference type="SMART" id="SM01183">
    <property type="entry name" value="EF1G"/>
    <property type="match status" value="1"/>
</dbReference>
<dbReference type="SUPFAM" id="SSF89942">
    <property type="entry name" value="eEF1-gamma domain"/>
    <property type="match status" value="1"/>
</dbReference>
<dbReference type="SUPFAM" id="SSF47616">
    <property type="entry name" value="GST C-terminal domain-like"/>
    <property type="match status" value="1"/>
</dbReference>
<dbReference type="SUPFAM" id="SSF52833">
    <property type="entry name" value="Thioredoxin-like"/>
    <property type="match status" value="1"/>
</dbReference>
<dbReference type="PROSITE" id="PS50040">
    <property type="entry name" value="EF1G_C"/>
    <property type="match status" value="1"/>
</dbReference>
<dbReference type="PROSITE" id="PS50405">
    <property type="entry name" value="GST_CTER"/>
    <property type="match status" value="1"/>
</dbReference>
<dbReference type="PROSITE" id="PS50404">
    <property type="entry name" value="GST_NTER"/>
    <property type="match status" value="1"/>
</dbReference>
<keyword id="KW-0002">3D-structure</keyword>
<keyword id="KW-0007">Acetylation</keyword>
<keyword id="KW-0963">Cytoplasm</keyword>
<keyword id="KW-0903">Direct protein sequencing</keyword>
<keyword id="KW-0251">Elongation factor</keyword>
<keyword id="KW-0539">Nucleus</keyword>
<keyword id="KW-0597">Phosphoprotein</keyword>
<keyword id="KW-0648">Protein biosynthesis</keyword>
<keyword id="KW-1185">Reference proteome</keyword>
<evidence type="ECO:0000255" key="1">
    <source>
        <dbReference type="PROSITE-ProRule" id="PRU00519"/>
    </source>
</evidence>
<evidence type="ECO:0000256" key="2">
    <source>
        <dbReference type="SAM" id="MobiDB-lite"/>
    </source>
</evidence>
<evidence type="ECO:0000269" key="3">
    <source>
    </source>
</evidence>
<evidence type="ECO:0000269" key="4">
    <source>
    </source>
</evidence>
<evidence type="ECO:0000269" key="5">
    <source>
    </source>
</evidence>
<evidence type="ECO:0000305" key="6"/>
<evidence type="ECO:0007744" key="7">
    <source>
    </source>
</evidence>
<evidence type="ECO:0007744" key="8">
    <source>
    </source>
</evidence>
<evidence type="ECO:0007829" key="9">
    <source>
        <dbReference type="PDB" id="1NHY"/>
    </source>
</evidence>
<proteinExistence type="evidence at protein level"/>
<feature type="initiator methionine" description="Removed" evidence="8">
    <location>
        <position position="1"/>
    </location>
</feature>
<feature type="chain" id="PRO_0000208831" description="Elongation factor 1-gamma 1">
    <location>
        <begin position="2"/>
        <end position="415"/>
    </location>
</feature>
<feature type="domain" description="GST N-terminal">
    <location>
        <begin position="2"/>
        <end position="78"/>
    </location>
</feature>
<feature type="domain" description="GST C-terminal">
    <location>
        <begin position="89"/>
        <end position="215"/>
    </location>
</feature>
<feature type="domain" description="EF-1-gamma C-terminal" evidence="1">
    <location>
        <begin position="254"/>
        <end position="415"/>
    </location>
</feature>
<feature type="region of interest" description="Disordered" evidence="2">
    <location>
        <begin position="212"/>
        <end position="256"/>
    </location>
</feature>
<feature type="modified residue" description="N-acetylserine" evidence="8">
    <location>
        <position position="2"/>
    </location>
</feature>
<feature type="modified residue" description="Phosphothreonine" evidence="7">
    <location>
        <position position="32"/>
    </location>
</feature>
<feature type="sequence conflict" description="In Ref. 1; AAA16892." evidence="6" ref="1">
    <original>W</original>
    <variation>C</variation>
    <location>
        <position position="191"/>
    </location>
</feature>
<feature type="strand" evidence="9">
    <location>
        <begin position="5"/>
        <end position="7"/>
    </location>
</feature>
<feature type="helix" evidence="9">
    <location>
        <begin position="12"/>
        <end position="24"/>
    </location>
</feature>
<feature type="strand" evidence="9">
    <location>
        <begin position="29"/>
        <end position="31"/>
    </location>
</feature>
<feature type="helix" evidence="9">
    <location>
        <begin position="33"/>
        <end position="35"/>
    </location>
</feature>
<feature type="helix" evidence="9">
    <location>
        <begin position="37"/>
        <end position="43"/>
    </location>
</feature>
<feature type="strand" evidence="9">
    <location>
        <begin position="49"/>
        <end position="53"/>
    </location>
</feature>
<feature type="helix" evidence="9">
    <location>
        <begin position="55"/>
        <end position="57"/>
    </location>
</feature>
<feature type="strand" evidence="9">
    <location>
        <begin position="59"/>
        <end position="62"/>
    </location>
</feature>
<feature type="helix" evidence="9">
    <location>
        <begin position="63"/>
        <end position="73"/>
    </location>
</feature>
<feature type="helix" evidence="9">
    <location>
        <begin position="77"/>
        <end position="83"/>
    </location>
</feature>
<feature type="helix" evidence="9">
    <location>
        <begin position="90"/>
        <end position="104"/>
    </location>
</feature>
<feature type="turn" evidence="9">
    <location>
        <begin position="105"/>
        <end position="108"/>
    </location>
</feature>
<feature type="helix" evidence="9">
    <location>
        <begin position="109"/>
        <end position="113"/>
    </location>
</feature>
<feature type="helix" evidence="9">
    <location>
        <begin position="115"/>
        <end position="118"/>
    </location>
</feature>
<feature type="helix" evidence="9">
    <location>
        <begin position="126"/>
        <end position="147"/>
    </location>
</feature>
<feature type="strand" evidence="9">
    <location>
        <begin position="151"/>
        <end position="157"/>
    </location>
</feature>
<feature type="helix" evidence="9">
    <location>
        <begin position="160"/>
        <end position="175"/>
    </location>
</feature>
<feature type="helix" evidence="9">
    <location>
        <begin position="179"/>
        <end position="184"/>
    </location>
</feature>
<feature type="helix" evidence="9">
    <location>
        <begin position="186"/>
        <end position="197"/>
    </location>
</feature>
<feature type="turn" evidence="9">
    <location>
        <begin position="199"/>
        <end position="201"/>
    </location>
</feature>
<feature type="helix" evidence="9">
    <location>
        <begin position="202"/>
        <end position="204"/>
    </location>
</feature>
<reference key="1">
    <citation type="journal article" date="1993" name="Mol. Cell. Biol.">
        <title>DRS1 to DRS7, novel genes required for ribosome assembly and function in Saccharomyces cerevisiae.</title>
        <authorList>
            <person name="Ripmaster T.L."/>
            <person name="Vaughn G.P."/>
            <person name="Woolford J.L. Jr."/>
        </authorList>
    </citation>
    <scope>NUCLEOTIDE SEQUENCE [GENOMIC DNA]</scope>
</reference>
<reference key="2">
    <citation type="journal article" date="1993" name="Yeast">
        <title>Cloning and genetic characterization of a calcium- and phospholipid-binding protein from Saccharomyces cerevisiae that is homologous to translation elongation factor-1 gamma.</title>
        <authorList>
            <person name="Kambouris N.G."/>
            <person name="Burke D.J."/>
            <person name="Creutz C.E."/>
        </authorList>
    </citation>
    <scope>NUCLEOTIDE SEQUENCE [GENOMIC DNA]</scope>
</reference>
<reference key="3">
    <citation type="journal article" date="1997" name="Nature">
        <title>The nucleotide sequence of Saccharomyces cerevisiae chromosome XVI.</title>
        <authorList>
            <person name="Bussey H."/>
            <person name="Storms R.K."/>
            <person name="Ahmed A."/>
            <person name="Albermann K."/>
            <person name="Allen E."/>
            <person name="Ansorge W."/>
            <person name="Araujo R."/>
            <person name="Aparicio A."/>
            <person name="Barrell B.G."/>
            <person name="Badcock K."/>
            <person name="Benes V."/>
            <person name="Botstein D."/>
            <person name="Bowman S."/>
            <person name="Brueckner M."/>
            <person name="Carpenter J."/>
            <person name="Cherry J.M."/>
            <person name="Chung E."/>
            <person name="Churcher C.M."/>
            <person name="Coster F."/>
            <person name="Davis K."/>
            <person name="Davis R.W."/>
            <person name="Dietrich F.S."/>
            <person name="Delius H."/>
            <person name="DiPaolo T."/>
            <person name="Dubois E."/>
            <person name="Duesterhoeft A."/>
            <person name="Duncan M."/>
            <person name="Floeth M."/>
            <person name="Fortin N."/>
            <person name="Friesen J.D."/>
            <person name="Fritz C."/>
            <person name="Goffeau A."/>
            <person name="Hall J."/>
            <person name="Hebling U."/>
            <person name="Heumann K."/>
            <person name="Hilbert H."/>
            <person name="Hillier L.W."/>
            <person name="Hunicke-Smith S."/>
            <person name="Hyman R.W."/>
            <person name="Johnston M."/>
            <person name="Kalman S."/>
            <person name="Kleine K."/>
            <person name="Komp C."/>
            <person name="Kurdi O."/>
            <person name="Lashkari D."/>
            <person name="Lew H."/>
            <person name="Lin A."/>
            <person name="Lin D."/>
            <person name="Louis E.J."/>
            <person name="Marathe R."/>
            <person name="Messenguy F."/>
            <person name="Mewes H.-W."/>
            <person name="Mirtipati S."/>
            <person name="Moestl D."/>
            <person name="Mueller-Auer S."/>
            <person name="Namath A."/>
            <person name="Nentwich U."/>
            <person name="Oefner P."/>
            <person name="Pearson D."/>
            <person name="Petel F.X."/>
            <person name="Pohl T.M."/>
            <person name="Purnelle B."/>
            <person name="Rajandream M.A."/>
            <person name="Rechmann S."/>
            <person name="Rieger M."/>
            <person name="Riles L."/>
            <person name="Roberts D."/>
            <person name="Schaefer M."/>
            <person name="Scharfe M."/>
            <person name="Scherens B."/>
            <person name="Schramm S."/>
            <person name="Schroeder M."/>
            <person name="Sdicu A.-M."/>
            <person name="Tettelin H."/>
            <person name="Urrestarazu L.A."/>
            <person name="Ushinsky S."/>
            <person name="Vierendeels F."/>
            <person name="Vissers S."/>
            <person name="Voss H."/>
            <person name="Walsh S.V."/>
            <person name="Wambutt R."/>
            <person name="Wang Y."/>
            <person name="Wedler E."/>
            <person name="Wedler H."/>
            <person name="Winnett E."/>
            <person name="Zhong W.-W."/>
            <person name="Zollner A."/>
            <person name="Vo D.H."/>
            <person name="Hani J."/>
        </authorList>
    </citation>
    <scope>NUCLEOTIDE SEQUENCE [LARGE SCALE GENOMIC DNA]</scope>
    <source>
        <strain>ATCC 204508 / S288c</strain>
    </source>
</reference>
<reference key="4">
    <citation type="journal article" date="2014" name="G3 (Bethesda)">
        <title>The reference genome sequence of Saccharomyces cerevisiae: Then and now.</title>
        <authorList>
            <person name="Engel S.R."/>
            <person name="Dietrich F.S."/>
            <person name="Fisk D.G."/>
            <person name="Binkley G."/>
            <person name="Balakrishnan R."/>
            <person name="Costanzo M.C."/>
            <person name="Dwight S.S."/>
            <person name="Hitz B.C."/>
            <person name="Karra K."/>
            <person name="Nash R.S."/>
            <person name="Weng S."/>
            <person name="Wong E.D."/>
            <person name="Lloyd P."/>
            <person name="Skrzypek M.S."/>
            <person name="Miyasato S.R."/>
            <person name="Simison M."/>
            <person name="Cherry J.M."/>
        </authorList>
    </citation>
    <scope>GENOME REANNOTATION</scope>
    <source>
        <strain>ATCC 204508 / S288c</strain>
    </source>
</reference>
<reference key="5">
    <citation type="journal article" date="1991" name="Yeast">
        <title>Calcium-dependent secretory vesicle-binding and lipid-binding proteins of Saccharomyces cerevisiae.</title>
        <authorList>
            <person name="Creutz C.E."/>
            <person name="Snyder S.L."/>
            <person name="Kambouris N.G."/>
        </authorList>
    </citation>
    <scope>PROTEIN SEQUENCE OF 357-373</scope>
</reference>
<reference key="6">
    <citation type="journal article" date="2003" name="Nature">
        <title>Global analysis of protein localization in budding yeast.</title>
        <authorList>
            <person name="Huh W.-K."/>
            <person name="Falvo J.V."/>
            <person name="Gerke L.C."/>
            <person name="Carroll A.S."/>
            <person name="Howson R.W."/>
            <person name="Weissman J.S."/>
            <person name="O'Shea E.K."/>
        </authorList>
    </citation>
    <scope>SUBCELLULAR LOCATION [LARGE SCALE ANALYSIS]</scope>
</reference>
<reference key="7">
    <citation type="journal article" date="2003" name="Nature">
        <title>Global analysis of protein expression in yeast.</title>
        <authorList>
            <person name="Ghaemmaghami S."/>
            <person name="Huh W.-K."/>
            <person name="Bower K."/>
            <person name="Howson R.W."/>
            <person name="Belle A."/>
            <person name="Dephoure N."/>
            <person name="O'Shea E.K."/>
            <person name="Weissman J.S."/>
        </authorList>
    </citation>
    <scope>LEVEL OF PROTEIN EXPRESSION [LARGE SCALE ANALYSIS]</scope>
</reference>
<reference key="8">
    <citation type="journal article" date="2003" name="Proc. Natl. Acad. Sci. U.S.A.">
        <title>A homologue of elongation factor 1 gamma regulates methionine sulfoxide reductase A gene expression in Saccharomyces cerevisiae.</title>
        <authorList>
            <person name="Hanbauer I."/>
            <person name="Boja E.S."/>
            <person name="Moskovitz J."/>
        </authorList>
    </citation>
    <scope>FUNCTION IN TRANSCRIPTIONAL REGULATION</scope>
    <scope>SUBCELLULAR LOCATION</scope>
    <scope>IDENTIFICATION BY MASS SPECTROMETRY</scope>
</reference>
<reference key="9">
    <citation type="journal article" date="2008" name="Mol. Cell. Proteomics">
        <title>A multidimensional chromatography technology for in-depth phosphoproteome analysis.</title>
        <authorList>
            <person name="Albuquerque C.P."/>
            <person name="Smolka M.B."/>
            <person name="Payne S.H."/>
            <person name="Bafna V."/>
            <person name="Eng J."/>
            <person name="Zhou H."/>
        </authorList>
    </citation>
    <scope>PHOSPHORYLATION [LARGE SCALE ANALYSIS] AT THR-32</scope>
    <scope>IDENTIFICATION BY MASS SPECTROMETRY [LARGE SCALE ANALYSIS]</scope>
</reference>
<reference key="10">
    <citation type="journal article" date="2012" name="Proc. Natl. Acad. Sci. U.S.A.">
        <title>N-terminal acetylome analyses and functional insights of the N-terminal acetyltransferase NatB.</title>
        <authorList>
            <person name="Van Damme P."/>
            <person name="Lasa M."/>
            <person name="Polevoda B."/>
            <person name="Gazquez C."/>
            <person name="Elosegui-Artola A."/>
            <person name="Kim D.S."/>
            <person name="De Juan-Pardo E."/>
            <person name="Demeyer K."/>
            <person name="Hole K."/>
            <person name="Larrea E."/>
            <person name="Timmerman E."/>
            <person name="Prieto J."/>
            <person name="Arnesen T."/>
            <person name="Sherman F."/>
            <person name="Gevaert K."/>
            <person name="Aldabe R."/>
        </authorList>
    </citation>
    <scope>ACETYLATION [LARGE SCALE ANALYSIS] AT SER-2</scope>
    <scope>CLEAVAGE OF INITIATOR METHIONINE [LARGE SCALE ANALYSIS]</scope>
    <scope>IDENTIFICATION BY MASS SPECTROMETRY [LARGE SCALE ANALYSIS]</scope>
</reference>
<reference key="11">
    <citation type="journal article" date="2003" name="J. Biol. Chem.">
        <title>The crystal structure of the glutathione S-transferase-like domain of elongation factor 1Bgamma from Saccharomyces cerevisiae.</title>
        <authorList>
            <person name="Jeppesen M.G."/>
            <person name="Ortiz P.A."/>
            <person name="Shepard W."/>
            <person name="Kinzy T.G."/>
            <person name="Nyborg J."/>
            <person name="Andersen G.R."/>
        </authorList>
    </citation>
    <scope>X-RAY CRYSTALLOGRAPHY (3.0 ANGSTROMS) OF 2-219</scope>
    <scope>INTERACTION WITH EFB1</scope>
    <scope>PUTATIVE STRUCTURE OF THE EEF1 COMPLEX</scope>
</reference>
<protein>
    <recommendedName>
        <fullName>Elongation factor 1-gamma 1</fullName>
        <shortName>EF-1-gamma 1</shortName>
    </recommendedName>
    <alternativeName>
        <fullName>Calcium and membrane-binding protein 1</fullName>
    </alternativeName>
    <alternativeName>
        <fullName>Calcium phospholipid-binding protein</fullName>
        <shortName>CPBP</shortName>
    </alternativeName>
    <alternativeName>
        <fullName>Eukaryotic elongation factor 1Bgamma 1</fullName>
        <shortName>eEF1Bgamma 1</shortName>
    </alternativeName>
    <alternativeName>
        <fullName>Translation elongation factor 1B gamma 1</fullName>
    </alternativeName>
</protein>